<accession>Q9QJ17</accession>
<comment type="subcellular location">
    <subcellularLocation>
        <location>Host membrane</location>
        <topology>Single-pass membrane protein</topology>
    </subcellularLocation>
</comment>
<reference key="1">
    <citation type="journal article" date="1999" name="J. Virol.">
        <title>Human herpesvirus 6B genome sequence: coding content and comparison with human herpesvirus 6A.</title>
        <authorList>
            <person name="Dominguez G."/>
            <person name="Dambaugh T.R."/>
            <person name="Stamey F.R."/>
            <person name="Dewhurst S."/>
            <person name="Inoue N."/>
            <person name="Pellett P.E."/>
        </authorList>
    </citation>
    <scope>NUCLEOTIDE SEQUENCE [LARGE SCALE GENOMIC DNA]</scope>
</reference>
<organism>
    <name type="scientific">Human herpesvirus 6B (strain Z29)</name>
    <name type="common">HHV-6 variant B</name>
    <name type="synonym">Human B lymphotropic virus</name>
    <dbReference type="NCBI Taxonomy" id="36351"/>
    <lineage>
        <taxon>Viruses</taxon>
        <taxon>Duplodnaviria</taxon>
        <taxon>Heunggongvirae</taxon>
        <taxon>Peploviricota</taxon>
        <taxon>Herviviricetes</taxon>
        <taxon>Herpesvirales</taxon>
        <taxon>Orthoherpesviridae</taxon>
        <taxon>Betaherpesvirinae</taxon>
        <taxon>Roseolovirus</taxon>
        <taxon>Roseolovirus humanbeta6b</taxon>
        <taxon>Human herpesvirus 6B</taxon>
    </lineage>
</organism>
<name>OX2V_HHV6Z</name>
<keyword id="KW-1015">Disulfide bond</keyword>
<keyword id="KW-0325">Glycoprotein</keyword>
<keyword id="KW-1043">Host membrane</keyword>
<keyword id="KW-0393">Immunoglobulin domain</keyword>
<keyword id="KW-0472">Membrane</keyword>
<keyword id="KW-1185">Reference proteome</keyword>
<keyword id="KW-0732">Signal</keyword>
<keyword id="KW-0812">Transmembrane</keyword>
<keyword id="KW-1133">Transmembrane helix</keyword>
<dbReference type="EMBL" id="AF157706">
    <property type="protein sequence ID" value="AAD49673.1"/>
    <property type="molecule type" value="Genomic_DNA"/>
</dbReference>
<dbReference type="RefSeq" id="NP_050264.1">
    <property type="nucleotide sequence ID" value="NC_000898.1"/>
</dbReference>
<dbReference type="GlyCosmos" id="Q9QJ17">
    <property type="glycosylation" value="4 sites, No reported glycans"/>
</dbReference>
<dbReference type="DNASU" id="1497085"/>
<dbReference type="GeneID" id="1497085"/>
<dbReference type="KEGG" id="vg:1497085"/>
<dbReference type="Proteomes" id="UP000006930">
    <property type="component" value="Segment"/>
</dbReference>
<dbReference type="GO" id="GO:0033644">
    <property type="term" value="C:host cell membrane"/>
    <property type="evidence" value="ECO:0007669"/>
    <property type="project" value="UniProtKB-SubCell"/>
</dbReference>
<dbReference type="GO" id="GO:0016020">
    <property type="term" value="C:membrane"/>
    <property type="evidence" value="ECO:0007669"/>
    <property type="project" value="UniProtKB-KW"/>
</dbReference>
<dbReference type="GO" id="GO:0098632">
    <property type="term" value="F:cell-cell adhesion mediator activity"/>
    <property type="evidence" value="ECO:0007669"/>
    <property type="project" value="InterPro"/>
</dbReference>
<dbReference type="Gene3D" id="2.60.40.10">
    <property type="entry name" value="Immunoglobulins"/>
    <property type="match status" value="2"/>
</dbReference>
<dbReference type="InterPro" id="IPR007110">
    <property type="entry name" value="Ig-like_dom"/>
</dbReference>
<dbReference type="InterPro" id="IPR036179">
    <property type="entry name" value="Ig-like_dom_sf"/>
</dbReference>
<dbReference type="InterPro" id="IPR013783">
    <property type="entry name" value="Ig-like_fold"/>
</dbReference>
<dbReference type="InterPro" id="IPR047164">
    <property type="entry name" value="OX2G-like"/>
</dbReference>
<dbReference type="PANTHER" id="PTHR46841">
    <property type="entry name" value="OX-2 MEMBRANE GLYCOPROTEIN"/>
    <property type="match status" value="1"/>
</dbReference>
<dbReference type="SUPFAM" id="SSF48726">
    <property type="entry name" value="Immunoglobulin"/>
    <property type="match status" value="2"/>
</dbReference>
<dbReference type="PROSITE" id="PS50835">
    <property type="entry name" value="IG_LIKE"/>
    <property type="match status" value="1"/>
</dbReference>
<proteinExistence type="inferred from homology"/>
<protein>
    <recommendedName>
        <fullName>Putative OX-2 membrane glycoprotein homolog</fullName>
    </recommendedName>
    <alternativeName>
        <fullName>Protein U85</fullName>
    </alternativeName>
</protein>
<gene>
    <name type="primary">U85</name>
</gene>
<feature type="signal peptide" evidence="1">
    <location>
        <begin position="1"/>
        <end position="18"/>
    </location>
</feature>
<feature type="chain" id="PRO_0000408408" description="Putative OX-2 membrane glycoprotein homolog">
    <location>
        <begin position="19"/>
        <end position="292"/>
    </location>
</feature>
<feature type="transmembrane region" description="Helical" evidence="2">
    <location>
        <begin position="263"/>
        <end position="283"/>
    </location>
</feature>
<feature type="domain" description="Ig-like V-type">
    <location>
        <begin position="24"/>
        <end position="136"/>
    </location>
</feature>
<feature type="domain" description="Ig-like C2-type">
    <location>
        <begin position="147"/>
        <end position="237"/>
    </location>
</feature>
<feature type="glycosylation site" description="N-linked (GlcNAc...) asparagine; by host" evidence="2">
    <location>
        <position position="45"/>
    </location>
</feature>
<feature type="glycosylation site" description="N-linked (GlcNAc...) asparagine; by host" evidence="2">
    <location>
        <position position="57"/>
    </location>
</feature>
<feature type="glycosylation site" description="N-linked (GlcNAc...) asparagine; by host" evidence="2">
    <location>
        <position position="72"/>
    </location>
</feature>
<feature type="glycosylation site" description="N-linked (GlcNAc...) asparagine; by host" evidence="2">
    <location>
        <position position="195"/>
    </location>
</feature>
<feature type="disulfide bond" evidence="3">
    <location>
        <begin position="42"/>
        <end position="126"/>
    </location>
</feature>
<sequence length="292" mass="33120">MSPLMLRLLPLLCIIISAHFVPRPETSPSLVYEIGSTVTFHCRLNTTTNIQSVSWYNKSRLISNHEIQNMDNLSFTDDGYVFIHELNKINNLDVDSKLYFHIKHDRTTSLLKIKARSAYDATCLTCTFTVDNEKTSATSCLKLIMKPIVVLYFRYLNNFLDVTCTVTSYPKPNVVIKFLGEVYKRDIPMVRQNENGSSTVSVSFTFKRRTKLEFVGKTISCLASSWFTNQKASALVTSGEHTVQNHDEYSKEAVKGSNSDETVFTWIVPLILILIISVMVLLISMCIVAFKS</sequence>
<organismHost>
    <name type="scientific">Homo sapiens</name>
    <name type="common">Human</name>
    <dbReference type="NCBI Taxonomy" id="9606"/>
</organismHost>
<evidence type="ECO:0000250" key="1"/>
<evidence type="ECO:0000255" key="2"/>
<evidence type="ECO:0000255" key="3">
    <source>
        <dbReference type="PROSITE-ProRule" id="PRU00114"/>
    </source>
</evidence>